<sequence length="864" mass="92664">MRLALLWALGLLGAGSPRPSPPLPNIGGTEEEQQASPERTLSGSMESRVVQDSPPMSLADVLQTGLPEALRISLELDSESHVLELLQNRDLIPGRPTLVWYQPDGTRMVSEGYSLENCCYRGRVQGHPSSWVSLCACSGIRGLIVLSPERGYTLELGPGDLQRPVISRIQDHLLLGHTCAPSWHASVPTRAGPDLLLEQHHAHRLKRDVVTETKIVELVIVADNSEVRKYPDFQQLLNRTLEAALLLDTFFQPLNVRVALVGLEAWTQHNLIEMSSNPAVLLDNFLRWRRTDLLPRLPHDSAQLVTVTSFSGPMVGMAIQNSICSPDFSGGVNMDHSTSILGVASSIAHELGHSLGLDHDSPGHSCPCPGPAPAKSCIMEASTDFLPGLNFSNCSRQALEKALLEGMGSCLFERQPSLAPMSSLCGNMFVDPGEQCDCGFPDECTDPCCDHFTCQLRPGAQCASDGPCCQNCKLHPAGWLCRPPTDDCDLPEFCPGDSSQCPSDIRLGDGEPCASGEAVCMHGRCASYARQCQSLWGPGAQPAAPLCLQTANTRGNAFGSCGRSPGGSYMPCAPRDVMCGQLQCQWGRSQPLLGSVQDRLSEVLEANGTQLNCSWVDLDLGNDVAQPLLALPGTACGPGLVCIGHRCQPVDLLGAQECRRKCHGHGVCDSSGHCRCEEGWAPPDCMTQLKATSSLTTGLLLSLLLLLVLVLLGASYWHRARLHQRLCQLKGSSCQYRAPQSCPPERPGPPQRAQQMTGTKQASVVSFPVPPSRPLPPNPVPKKLQAALADRSNPPTRPLPADPVVRRPKSQGPTKPPPPRKPLPANPQGQHPPGDLPGPGDGSLPLVVPSRPAPPPPAASSLYL</sequence>
<organism>
    <name type="scientific">Mus musculus</name>
    <name type="common">Mouse</name>
    <dbReference type="NCBI Taxonomy" id="10090"/>
    <lineage>
        <taxon>Eukaryota</taxon>
        <taxon>Metazoa</taxon>
        <taxon>Chordata</taxon>
        <taxon>Craniata</taxon>
        <taxon>Vertebrata</taxon>
        <taxon>Euteleostomi</taxon>
        <taxon>Mammalia</taxon>
        <taxon>Eutheria</taxon>
        <taxon>Euarchontoglires</taxon>
        <taxon>Glires</taxon>
        <taxon>Rodentia</taxon>
        <taxon>Myomorpha</taxon>
        <taxon>Muroidea</taxon>
        <taxon>Muridae</taxon>
        <taxon>Murinae</taxon>
        <taxon>Mus</taxon>
        <taxon>Mus</taxon>
    </lineage>
</organism>
<accession>O88839</accession>
<accession>A4ZYV2</accession>
<accession>Q3TDN7</accession>
<accession>Q3U7C2</accession>
<accession>Q3UE21</accession>
<accession>Q8C7Z0</accession>
<accession>Q91VS9</accession>
<accession>Q9QYL2</accession>
<feature type="signal peptide" evidence="3">
    <location>
        <begin position="1"/>
        <end position="17"/>
    </location>
</feature>
<feature type="propeptide" id="PRO_0000029084" evidence="18">
    <location>
        <begin position="18"/>
        <end position="207"/>
    </location>
</feature>
<feature type="chain" id="PRO_0000029085" description="Disintegrin and metalloproteinase domain-containing protein 15">
    <location>
        <begin position="208"/>
        <end position="864"/>
    </location>
</feature>
<feature type="topological domain" description="Extracellular" evidence="3">
    <location>
        <begin position="208"/>
        <end position="696"/>
    </location>
</feature>
<feature type="transmembrane region" description="Helical" evidence="3">
    <location>
        <begin position="697"/>
        <end position="717"/>
    </location>
</feature>
<feature type="topological domain" description="Cytoplasmic" evidence="3">
    <location>
        <begin position="718"/>
        <end position="864"/>
    </location>
</feature>
<feature type="domain" description="Peptidase M12B" evidence="6">
    <location>
        <begin position="214"/>
        <end position="415"/>
    </location>
</feature>
<feature type="domain" description="Disintegrin" evidence="4">
    <location>
        <begin position="422"/>
        <end position="509"/>
    </location>
</feature>
<feature type="domain" description="EGF-like" evidence="5">
    <location>
        <begin position="658"/>
        <end position="686"/>
    </location>
</feature>
<feature type="region of interest" description="Disordered" evidence="8">
    <location>
        <begin position="18"/>
        <end position="45"/>
    </location>
</feature>
<feature type="region of interest" description="Disordered" evidence="8">
    <location>
        <begin position="736"/>
        <end position="864"/>
    </location>
</feature>
<feature type="short sequence motif" description="Cysteine switch" evidence="1">
    <location>
        <begin position="177"/>
        <end position="184"/>
    </location>
</feature>
<feature type="short sequence motif" description="SH3-binding" evidence="3">
    <location>
        <begin position="816"/>
        <end position="822"/>
    </location>
</feature>
<feature type="short sequence motif" description="SH3-binding" evidence="3">
    <location>
        <begin position="851"/>
        <end position="857"/>
    </location>
</feature>
<feature type="compositionally biased region" description="Polar residues" evidence="8">
    <location>
        <begin position="34"/>
        <end position="45"/>
    </location>
</feature>
<feature type="compositionally biased region" description="Pro residues" evidence="8">
    <location>
        <begin position="741"/>
        <end position="750"/>
    </location>
</feature>
<feature type="compositionally biased region" description="Polar residues" evidence="8">
    <location>
        <begin position="752"/>
        <end position="762"/>
    </location>
</feature>
<feature type="compositionally biased region" description="Pro residues" evidence="8">
    <location>
        <begin position="768"/>
        <end position="780"/>
    </location>
</feature>
<feature type="compositionally biased region" description="Pro residues" evidence="8">
    <location>
        <begin position="814"/>
        <end position="825"/>
    </location>
</feature>
<feature type="active site" evidence="6 7">
    <location>
        <position position="350"/>
    </location>
</feature>
<feature type="binding site" description="in inhibited form" evidence="1">
    <location>
        <position position="179"/>
    </location>
    <ligand>
        <name>Zn(2+)</name>
        <dbReference type="ChEBI" id="CHEBI:29105"/>
        <note>catalytic</note>
    </ligand>
</feature>
<feature type="binding site" evidence="3">
    <location>
        <position position="349"/>
    </location>
    <ligand>
        <name>Zn(2+)</name>
        <dbReference type="ChEBI" id="CHEBI:29105"/>
        <note>catalytic</note>
    </ligand>
</feature>
<feature type="binding site" evidence="3">
    <location>
        <position position="353"/>
    </location>
    <ligand>
        <name>Zn(2+)</name>
        <dbReference type="ChEBI" id="CHEBI:29105"/>
        <note>catalytic</note>
    </ligand>
</feature>
<feature type="binding site" evidence="3">
    <location>
        <position position="359"/>
    </location>
    <ligand>
        <name>Zn(2+)</name>
        <dbReference type="ChEBI" id="CHEBI:29105"/>
        <note>catalytic</note>
    </ligand>
</feature>
<feature type="site" description="Cleavage; by furin" evidence="3">
    <location>
        <begin position="289"/>
        <end position="290"/>
    </location>
</feature>
<feature type="modified residue" description="Phosphotyrosine; by HCK and LCK" evidence="2">
    <location>
        <position position="716"/>
    </location>
</feature>
<feature type="modified residue" description="Phosphotyrosine; by HCK and LCK" evidence="2">
    <location>
        <position position="736"/>
    </location>
</feature>
<feature type="glycosylation site" description="N-linked (GlcNAc...) asparagine" evidence="3">
    <location>
        <position position="238"/>
    </location>
</feature>
<feature type="glycosylation site" description="N-linked (GlcNAc...) asparagine" evidence="3">
    <location>
        <position position="390"/>
    </location>
</feature>
<feature type="glycosylation site" description="N-linked (GlcNAc...) asparagine" evidence="3">
    <location>
        <position position="393"/>
    </location>
</feature>
<feature type="glycosylation site" description="N-linked (GlcNAc...) asparagine" evidence="3">
    <location>
        <position position="607"/>
    </location>
</feature>
<feature type="glycosylation site" description="N-linked (GlcNAc...) asparagine" evidence="3">
    <location>
        <position position="612"/>
    </location>
</feature>
<feature type="disulfide bond" evidence="1">
    <location>
        <begin position="324"/>
        <end position="410"/>
    </location>
</feature>
<feature type="disulfide bond" evidence="1">
    <location>
        <begin position="366"/>
        <end position="394"/>
    </location>
</feature>
<feature type="disulfide bond" evidence="1">
    <location>
        <begin position="368"/>
        <end position="377"/>
    </location>
</feature>
<feature type="disulfide bond" evidence="1">
    <location>
        <begin position="481"/>
        <end position="501"/>
    </location>
</feature>
<feature type="disulfide bond" evidence="1">
    <location>
        <begin position="658"/>
        <end position="668"/>
    </location>
</feature>
<feature type="disulfide bond" evidence="1">
    <location>
        <begin position="662"/>
        <end position="674"/>
    </location>
</feature>
<feature type="disulfide bond" evidence="1">
    <location>
        <begin position="676"/>
        <end position="685"/>
    </location>
</feature>
<feature type="splice variant" id="VSP_008879" description="In isoform 4." evidence="15">
    <location>
        <begin position="415"/>
        <end position="830"/>
    </location>
</feature>
<feature type="splice variant" id="VSP_008881" description="In isoform 3." evidence="16 17">
    <location>
        <begin position="761"/>
        <end position="809"/>
    </location>
</feature>
<feature type="splice variant" id="VSP_008880" description="In isoform 2." evidence="18">
    <location>
        <begin position="761"/>
        <end position="785"/>
    </location>
</feature>
<feature type="mutagenesis site" description="Reduced binding to CHO cells expressing ITAG9-ITGB1." evidence="9">
    <original>R</original>
    <variation>A</variation>
    <location>
        <position position="482"/>
    </location>
</feature>
<feature type="mutagenesis site" description="Reduced binding to CHO cells expressing ITAG9-ITGB1." evidence="9">
    <original>D</original>
    <variation>A</variation>
    <location>
        <position position="489"/>
    </location>
</feature>
<feature type="mutagenesis site" description="Reduced binding to CHO cells expressing ITAG9-ITGB1." evidence="9">
    <original>L</original>
    <variation>A</variation>
    <location>
        <position position="490"/>
    </location>
</feature>
<feature type="mutagenesis site" description="Reduced binding to CHO cells expressing ITAG9-ITGB1." evidence="9">
    <original>P</original>
    <variation>A</variation>
    <location>
        <position position="491"/>
    </location>
</feature>
<feature type="mutagenesis site" description="Reduced binding to CHO cells expressing ITAG9-ITGB1." evidence="9">
    <original>E</original>
    <variation>A</variation>
    <location>
        <position position="492"/>
    </location>
</feature>
<feature type="mutagenesis site" description="Reduced binding to CHO cells expressing ITAG9-ITGB1." evidence="9">
    <original>F</original>
    <variation>A</variation>
    <location>
        <position position="493"/>
    </location>
</feature>
<feature type="sequence conflict" description="In Ref. 2; BAA88903." evidence="18" ref="2">
    <original>PP</original>
    <variation>RR</variation>
    <location>
        <begin position="21"/>
        <end position="22"/>
    </location>
</feature>
<feature type="sequence conflict" description="In Ref. 3; BAE29090." evidence="18" ref="3">
    <original>Q</original>
    <variation>H</variation>
    <location>
        <position position="51"/>
    </location>
</feature>
<feature type="sequence conflict" description="In Ref. 3; BAE41564." evidence="18" ref="3">
    <original>S</original>
    <variation>P</variation>
    <location>
        <position position="73"/>
    </location>
</feature>
<feature type="sequence conflict" description="In Ref. 2; BAA88903." evidence="18" ref="2">
    <original>E</original>
    <variation>Q</variation>
    <location>
        <position position="443"/>
    </location>
</feature>
<feature type="sequence conflict" description="In Ref. 2; BAA88903." evidence="18" ref="2">
    <original>G</original>
    <variation>E</variation>
    <location>
        <position position="459"/>
    </location>
</feature>
<feature type="sequence conflict" description="In Ref. 2; BAA88903." evidence="18" ref="2">
    <original>SP</original>
    <variation>T</variation>
    <location>
        <begin position="564"/>
        <end position="565"/>
    </location>
</feature>
<feature type="sequence conflict" description="In Ref. 2; BAA88903." evidence="18" ref="2">
    <original>G</original>
    <variation>E</variation>
    <location>
        <position position="654"/>
    </location>
</feature>
<feature type="sequence conflict" description="In Ref. 2; BAA88903." evidence="18" ref="2">
    <original>R</original>
    <variation>S</variation>
    <location>
        <position position="660"/>
    </location>
</feature>
<feature type="sequence conflict" description="In Ref. 2; BAA88903." evidence="18" ref="2">
    <original>L</original>
    <variation>R</variation>
    <location>
        <position position="703"/>
    </location>
</feature>
<feature type="sequence conflict" description="In Ref. 2; BAA88903." evidence="18" ref="2">
    <original>L</original>
    <variation>R</variation>
    <location>
        <position position="712"/>
    </location>
</feature>
<feature type="sequence conflict" description="In Ref. 2; BAA88903." evidence="18" ref="2">
    <original>L</original>
    <variation>R</variation>
    <location>
        <position position="729"/>
    </location>
</feature>
<feature type="sequence conflict" description="In Ref. 3; BAE41564." evidence="18" ref="3">
    <original>Q</original>
    <variation>R</variation>
    <location>
        <position position="830"/>
    </location>
</feature>
<feature type="sequence conflict" description="In Ref. 2; BAA88903." evidence="18" ref="2">
    <original>L</original>
    <variation>S</variation>
    <location>
        <position position="846"/>
    </location>
</feature>
<feature type="sequence conflict" description="In Ref. 2; BAA88903." evidence="18" ref="2">
    <original>PAP</original>
    <variation>AAS</variation>
    <location>
        <begin position="852"/>
        <end position="854"/>
    </location>
</feature>
<feature type="sequence conflict" description="In Ref. 2; BAA88903." evidence="18" ref="2">
    <original>A</original>
    <variation>P</variation>
    <location>
        <position position="859"/>
    </location>
</feature>
<keyword id="KW-0025">Alternative splicing</keyword>
<keyword id="KW-0037">Angiogenesis</keyword>
<keyword id="KW-0130">Cell adhesion</keyword>
<keyword id="KW-0965">Cell junction</keyword>
<keyword id="KW-0966">Cell projection</keyword>
<keyword id="KW-0969">Cilium</keyword>
<keyword id="KW-0165">Cleavage on pair of basic residues</keyword>
<keyword id="KW-0177">Collagen degradation</keyword>
<keyword id="KW-0968">Cytoplasmic vesicle</keyword>
<keyword id="KW-1015">Disulfide bond</keyword>
<keyword id="KW-0245">EGF-like domain</keyword>
<keyword id="KW-0282">Flagellum</keyword>
<keyword id="KW-0325">Glycoprotein</keyword>
<keyword id="KW-0378">Hydrolase</keyword>
<keyword id="KW-0472">Membrane</keyword>
<keyword id="KW-0479">Metal-binding</keyword>
<keyword id="KW-0482">Metalloprotease</keyword>
<keyword id="KW-0597">Phosphoprotein</keyword>
<keyword id="KW-0645">Protease</keyword>
<keyword id="KW-1185">Reference proteome</keyword>
<keyword id="KW-0729">SH3-binding</keyword>
<keyword id="KW-0732">Signal</keyword>
<keyword id="KW-0812">Transmembrane</keyword>
<keyword id="KW-1133">Transmembrane helix</keyword>
<keyword id="KW-0862">Zinc</keyword>
<keyword id="KW-0865">Zymogen</keyword>
<gene>
    <name type="primary">Adam15</name>
    <name type="synonym">Mdc15</name>
</gene>
<evidence type="ECO:0000250" key="1"/>
<evidence type="ECO:0000250" key="2">
    <source>
        <dbReference type="UniProtKB" id="Q13444"/>
    </source>
</evidence>
<evidence type="ECO:0000255" key="3"/>
<evidence type="ECO:0000255" key="4">
    <source>
        <dbReference type="PROSITE-ProRule" id="PRU00068"/>
    </source>
</evidence>
<evidence type="ECO:0000255" key="5">
    <source>
        <dbReference type="PROSITE-ProRule" id="PRU00076"/>
    </source>
</evidence>
<evidence type="ECO:0000255" key="6">
    <source>
        <dbReference type="PROSITE-ProRule" id="PRU00276"/>
    </source>
</evidence>
<evidence type="ECO:0000255" key="7">
    <source>
        <dbReference type="PROSITE-ProRule" id="PRU10095"/>
    </source>
</evidence>
<evidence type="ECO:0000256" key="8">
    <source>
        <dbReference type="SAM" id="MobiDB-lite"/>
    </source>
</evidence>
<evidence type="ECO:0000269" key="9">
    <source>
    </source>
</evidence>
<evidence type="ECO:0000269" key="10">
    <source>
    </source>
</evidence>
<evidence type="ECO:0000269" key="11">
    <source>
    </source>
</evidence>
<evidence type="ECO:0000269" key="12">
    <source>
    </source>
</evidence>
<evidence type="ECO:0000269" key="13">
    <source>
    </source>
</evidence>
<evidence type="ECO:0000269" key="14">
    <source>
    </source>
</evidence>
<evidence type="ECO:0000303" key="15">
    <source>
    </source>
</evidence>
<evidence type="ECO:0000303" key="16">
    <source>
    </source>
</evidence>
<evidence type="ECO:0000303" key="17">
    <source>
    </source>
</evidence>
<evidence type="ECO:0000305" key="18"/>
<reference key="1">
    <citation type="journal article" date="1998" name="J. Biol. Chem.">
        <title>Intracellular maturation of the mouse metalloprotease disintegrin MDC15.</title>
        <authorList>
            <person name="Lum L."/>
            <person name="Reid M.S."/>
            <person name="Blobel C.P."/>
        </authorList>
    </citation>
    <scope>NUCLEOTIDE SEQUENCE [MRNA] (ISOFORM 3)</scope>
    <scope>PROTEOLYTIC PROCESSING</scope>
    <source>
        <tissue>Lung</tissue>
    </source>
</reference>
<reference key="2">
    <citation type="journal article" date="2003" name="Biochem. Biophys. Res. Commun.">
        <title>Structure and expression of the murine ADAM 15 gene and its splice variants, and difference of interaction between their cytoplasmic domains and Src family proteins.</title>
        <authorList>
            <person name="Shimizu E."/>
            <person name="Yasui A."/>
            <person name="Matsuura K."/>
            <person name="Hijiya N."/>
            <person name="Higuchi Y."/>
            <person name="Yamamoto S."/>
        </authorList>
    </citation>
    <scope>NUCLEOTIDE SEQUENCE [GENOMIC DNA] (ISOFORMS 1; 2 AND 3)</scope>
    <source>
        <tissue>Myeloid</tissue>
        <tissue>Myeloma</tissue>
    </source>
</reference>
<reference key="3">
    <citation type="journal article" date="2005" name="Science">
        <title>The transcriptional landscape of the mammalian genome.</title>
        <authorList>
            <person name="Carninci P."/>
            <person name="Kasukawa T."/>
            <person name="Katayama S."/>
            <person name="Gough J."/>
            <person name="Frith M.C."/>
            <person name="Maeda N."/>
            <person name="Oyama R."/>
            <person name="Ravasi T."/>
            <person name="Lenhard B."/>
            <person name="Wells C."/>
            <person name="Kodzius R."/>
            <person name="Shimokawa K."/>
            <person name="Bajic V.B."/>
            <person name="Brenner S.E."/>
            <person name="Batalov S."/>
            <person name="Forrest A.R."/>
            <person name="Zavolan M."/>
            <person name="Davis M.J."/>
            <person name="Wilming L.G."/>
            <person name="Aidinis V."/>
            <person name="Allen J.E."/>
            <person name="Ambesi-Impiombato A."/>
            <person name="Apweiler R."/>
            <person name="Aturaliya R.N."/>
            <person name="Bailey T.L."/>
            <person name="Bansal M."/>
            <person name="Baxter L."/>
            <person name="Beisel K.W."/>
            <person name="Bersano T."/>
            <person name="Bono H."/>
            <person name="Chalk A.M."/>
            <person name="Chiu K.P."/>
            <person name="Choudhary V."/>
            <person name="Christoffels A."/>
            <person name="Clutterbuck D.R."/>
            <person name="Crowe M.L."/>
            <person name="Dalla E."/>
            <person name="Dalrymple B.P."/>
            <person name="de Bono B."/>
            <person name="Della Gatta G."/>
            <person name="di Bernardo D."/>
            <person name="Down T."/>
            <person name="Engstrom P."/>
            <person name="Fagiolini M."/>
            <person name="Faulkner G."/>
            <person name="Fletcher C.F."/>
            <person name="Fukushima T."/>
            <person name="Furuno M."/>
            <person name="Futaki S."/>
            <person name="Gariboldi M."/>
            <person name="Georgii-Hemming P."/>
            <person name="Gingeras T.R."/>
            <person name="Gojobori T."/>
            <person name="Green R.E."/>
            <person name="Gustincich S."/>
            <person name="Harbers M."/>
            <person name="Hayashi Y."/>
            <person name="Hensch T.K."/>
            <person name="Hirokawa N."/>
            <person name="Hill D."/>
            <person name="Huminiecki L."/>
            <person name="Iacono M."/>
            <person name="Ikeo K."/>
            <person name="Iwama A."/>
            <person name="Ishikawa T."/>
            <person name="Jakt M."/>
            <person name="Kanapin A."/>
            <person name="Katoh M."/>
            <person name="Kawasawa Y."/>
            <person name="Kelso J."/>
            <person name="Kitamura H."/>
            <person name="Kitano H."/>
            <person name="Kollias G."/>
            <person name="Krishnan S.P."/>
            <person name="Kruger A."/>
            <person name="Kummerfeld S.K."/>
            <person name="Kurochkin I.V."/>
            <person name="Lareau L.F."/>
            <person name="Lazarevic D."/>
            <person name="Lipovich L."/>
            <person name="Liu J."/>
            <person name="Liuni S."/>
            <person name="McWilliam S."/>
            <person name="Madan Babu M."/>
            <person name="Madera M."/>
            <person name="Marchionni L."/>
            <person name="Matsuda H."/>
            <person name="Matsuzawa S."/>
            <person name="Miki H."/>
            <person name="Mignone F."/>
            <person name="Miyake S."/>
            <person name="Morris K."/>
            <person name="Mottagui-Tabar S."/>
            <person name="Mulder N."/>
            <person name="Nakano N."/>
            <person name="Nakauchi H."/>
            <person name="Ng P."/>
            <person name="Nilsson R."/>
            <person name="Nishiguchi S."/>
            <person name="Nishikawa S."/>
            <person name="Nori F."/>
            <person name="Ohara O."/>
            <person name="Okazaki Y."/>
            <person name="Orlando V."/>
            <person name="Pang K.C."/>
            <person name="Pavan W.J."/>
            <person name="Pavesi G."/>
            <person name="Pesole G."/>
            <person name="Petrovsky N."/>
            <person name="Piazza S."/>
            <person name="Reed J."/>
            <person name="Reid J.F."/>
            <person name="Ring B.Z."/>
            <person name="Ringwald M."/>
            <person name="Rost B."/>
            <person name="Ruan Y."/>
            <person name="Salzberg S.L."/>
            <person name="Sandelin A."/>
            <person name="Schneider C."/>
            <person name="Schoenbach C."/>
            <person name="Sekiguchi K."/>
            <person name="Semple C.A."/>
            <person name="Seno S."/>
            <person name="Sessa L."/>
            <person name="Sheng Y."/>
            <person name="Shibata Y."/>
            <person name="Shimada H."/>
            <person name="Shimada K."/>
            <person name="Silva D."/>
            <person name="Sinclair B."/>
            <person name="Sperling S."/>
            <person name="Stupka E."/>
            <person name="Sugiura K."/>
            <person name="Sultana R."/>
            <person name="Takenaka Y."/>
            <person name="Taki K."/>
            <person name="Tammoja K."/>
            <person name="Tan S.L."/>
            <person name="Tang S."/>
            <person name="Taylor M.S."/>
            <person name="Tegner J."/>
            <person name="Teichmann S.A."/>
            <person name="Ueda H.R."/>
            <person name="van Nimwegen E."/>
            <person name="Verardo R."/>
            <person name="Wei C.L."/>
            <person name="Yagi K."/>
            <person name="Yamanishi H."/>
            <person name="Zabarovsky E."/>
            <person name="Zhu S."/>
            <person name="Zimmer A."/>
            <person name="Hide W."/>
            <person name="Bult C."/>
            <person name="Grimmond S.M."/>
            <person name="Teasdale R.D."/>
            <person name="Liu E.T."/>
            <person name="Brusic V."/>
            <person name="Quackenbush J."/>
            <person name="Wahlestedt C."/>
            <person name="Mattick J.S."/>
            <person name="Hume D.A."/>
            <person name="Kai C."/>
            <person name="Sasaki D."/>
            <person name="Tomaru Y."/>
            <person name="Fukuda S."/>
            <person name="Kanamori-Katayama M."/>
            <person name="Suzuki M."/>
            <person name="Aoki J."/>
            <person name="Arakawa T."/>
            <person name="Iida J."/>
            <person name="Imamura K."/>
            <person name="Itoh M."/>
            <person name="Kato T."/>
            <person name="Kawaji H."/>
            <person name="Kawagashira N."/>
            <person name="Kawashima T."/>
            <person name="Kojima M."/>
            <person name="Kondo S."/>
            <person name="Konno H."/>
            <person name="Nakano K."/>
            <person name="Ninomiya N."/>
            <person name="Nishio T."/>
            <person name="Okada M."/>
            <person name="Plessy C."/>
            <person name="Shibata K."/>
            <person name="Shiraki T."/>
            <person name="Suzuki S."/>
            <person name="Tagami M."/>
            <person name="Waki K."/>
            <person name="Watahiki A."/>
            <person name="Okamura-Oho Y."/>
            <person name="Suzuki H."/>
            <person name="Kawai J."/>
            <person name="Hayashizaki Y."/>
        </authorList>
    </citation>
    <scope>NUCLEOTIDE SEQUENCE [LARGE SCALE MRNA] (ISOFORMS 1 AND 3)</scope>
    <source>
        <strain>C57BL/6J</strain>
        <strain>NOD</strain>
        <tissue>Bone marrow macrophage</tissue>
        <tissue>Cerebellum</tissue>
        <tissue>Dendritic cell</tissue>
    </source>
</reference>
<reference key="4">
    <citation type="journal article" date="2004" name="Genome Res.">
        <title>The status, quality, and expansion of the NIH full-length cDNA project: the Mammalian Gene Collection (MGC).</title>
        <authorList>
            <consortium name="The MGC Project Team"/>
        </authorList>
    </citation>
    <scope>NUCLEOTIDE SEQUENCE [LARGE SCALE MRNA] (ISOFORM 4)</scope>
    <source>
        <tissue>Mammary gland</tissue>
    </source>
</reference>
<reference key="5">
    <citation type="journal article" date="2008" name="Reproduction">
        <title>Presence, processing, and localization of mouse ADAM15 during sperm maturation and the role of its disintegrin domain during sperm-egg binding.</title>
        <authorList>
            <person name="Pasten-Hidalgo K."/>
            <person name="Hernandez-Rivas R."/>
            <person name="Roa-Espitia A.L."/>
            <person name="Sanchez-Gutierrez M."/>
            <person name="Martinez-Perez F."/>
            <person name="Monrroy A.O."/>
            <person name="Hernandez-Gonzalez E.O."/>
            <person name="Mujica A."/>
        </authorList>
    </citation>
    <scope>NUCLEOTIDE SEQUENCE [MRNA] OF 207-694 (ISOFORMS 1/2/3)</scope>
    <scope>FUNCTION</scope>
    <scope>SUBCELLULAR LOCATION</scope>
    <scope>TISSUE SPECIFICITY</scope>
    <source>
        <tissue>Testis</tissue>
    </source>
</reference>
<reference key="6">
    <citation type="journal article" date="1999" name="J. Biol. Chem.">
        <title>Interaction of the metalloprotease disintegrins MDC9 and MDC15 with two SH3 domain-containing proteins, endophilin I and SH3PX1.</title>
        <authorList>
            <person name="Howard L."/>
            <person name="Nelson K.K."/>
            <person name="Maciewicz R.A."/>
            <person name="Blobel C.P."/>
        </authorList>
    </citation>
    <scope>INTERACTION WITH ENDOPHILIN I AND SNX9</scope>
</reference>
<reference key="7">
    <citation type="journal article" date="2002" name="J. Biol. Chem.">
        <title>Functional classification of ADAMs based on a conserved motif for binding to integrin alpha 9beta 1: implications for sperm-egg binding and other cell interactions.</title>
        <authorList>
            <person name="Eto K."/>
            <person name="Huet C."/>
            <person name="Tarui T."/>
            <person name="Kupriyanov S."/>
            <person name="Liu H.Z."/>
            <person name="Puzon-McLaughlin W."/>
            <person name="Zhang X.P."/>
            <person name="Sheppard D."/>
            <person name="Engvall E."/>
            <person name="Takada Y."/>
        </authorList>
    </citation>
    <scope>FUNCTION</scope>
    <scope>INTERACTION WITH INTEGRIN ALPHAV-BETA3 AND ALPHA9-BETA1</scope>
    <scope>MUTAGENESIS OF ARG-482; ASP-489; LEU-490; PRO-491; GLU-492 AND PHE-493</scope>
</reference>
<reference key="8">
    <citation type="journal article" date="2003" name="Mol. Cell. Biol.">
        <title>Potential role for ADAM15 in pathological neovascularization in mice.</title>
        <authorList>
            <person name="Horiuchi K."/>
            <person name="Weskamp G."/>
            <person name="Lum L."/>
            <person name="Hammes H.P."/>
            <person name="Cai H."/>
            <person name="Brodie T.A."/>
            <person name="Ludwig T."/>
            <person name="Chiusaroli R."/>
            <person name="Baron R."/>
            <person name="Preissner K.T."/>
            <person name="Manova K."/>
            <person name="Blobel C.P."/>
        </authorList>
    </citation>
    <scope>FUNCTION</scope>
    <scope>DEVELOPMENTAL STAGE</scope>
    <scope>INDUCTION</scope>
</reference>
<reference key="9">
    <citation type="journal article" date="2005" name="Arthritis Rheum.">
        <title>Homeostatic effects of the metalloproteinase disintegrin ADAM15 in degenerative cartilage remodeling.</title>
        <authorList>
            <person name="Bohm B.B."/>
            <person name="Aigner T."/>
            <person name="Roy B."/>
            <person name="Brodie T.A."/>
            <person name="Blobel C.P."/>
            <person name="Burkhardt H."/>
        </authorList>
    </citation>
    <scope>FUNCTION</scope>
</reference>
<reference key="10">
    <citation type="journal article" date="2008" name="FASEB J.">
        <title>An Adam15 amplification loop promotes vascular endothelial growth factor-induced ocular neovascularization.</title>
        <authorList>
            <person name="Xie B."/>
            <person name="Shen J."/>
            <person name="Dong A."/>
            <person name="Swaim M."/>
            <person name="Hackett S.F."/>
            <person name="Wyder L."/>
            <person name="Worpenberg S."/>
            <person name="Barbieri S."/>
            <person name="Campochiaro P.A."/>
        </authorList>
    </citation>
    <scope>TISSUE SPECIFICITY</scope>
    <scope>DEVELOPMENTAL STAGE</scope>
    <scope>INDUCTION</scope>
</reference>
<dbReference type="EC" id="3.4.24.-"/>
<dbReference type="EMBL" id="AF006196">
    <property type="protein sequence ID" value="AAC61896.1"/>
    <property type="molecule type" value="mRNA"/>
</dbReference>
<dbReference type="EMBL" id="AB022089">
    <property type="protein sequence ID" value="BAA88903.1"/>
    <property type="molecule type" value="Genomic_DNA"/>
</dbReference>
<dbReference type="EMBL" id="AK048901">
    <property type="protein sequence ID" value="BAC33485.1"/>
    <property type="molecule type" value="mRNA"/>
</dbReference>
<dbReference type="EMBL" id="AK149796">
    <property type="protein sequence ID" value="BAE29090.1"/>
    <property type="molecule type" value="mRNA"/>
</dbReference>
<dbReference type="EMBL" id="AK151804">
    <property type="protein sequence ID" value="BAE30703.1"/>
    <property type="molecule type" value="mRNA"/>
</dbReference>
<dbReference type="EMBL" id="AK152725">
    <property type="protein sequence ID" value="BAE31447.1"/>
    <property type="molecule type" value="mRNA"/>
</dbReference>
<dbReference type="EMBL" id="AK170101">
    <property type="protein sequence ID" value="BAE41564.1"/>
    <property type="molecule type" value="mRNA"/>
</dbReference>
<dbReference type="EMBL" id="BC009132">
    <property type="protein sequence ID" value="AAH09132.1"/>
    <property type="molecule type" value="mRNA"/>
</dbReference>
<dbReference type="EMBL" id="EF506571">
    <property type="protein sequence ID" value="ABP73662.1"/>
    <property type="molecule type" value="mRNA"/>
</dbReference>
<dbReference type="CCDS" id="CCDS17502.1">
    <molecule id="O88839-1"/>
</dbReference>
<dbReference type="CCDS" id="CCDS17503.1">
    <molecule id="O88839-3"/>
</dbReference>
<dbReference type="RefSeq" id="NP_001032811.2">
    <molecule id="O88839-1"/>
    <property type="nucleotide sequence ID" value="NM_001037722.4"/>
</dbReference>
<dbReference type="RefSeq" id="NP_001396412.1">
    <molecule id="O88839-2"/>
    <property type="nucleotide sequence ID" value="NM_001409483.1"/>
</dbReference>
<dbReference type="RefSeq" id="NP_033744.1">
    <molecule id="O88839-3"/>
    <property type="nucleotide sequence ID" value="NM_009614.4"/>
</dbReference>
<dbReference type="RefSeq" id="XP_006500981.1">
    <property type="nucleotide sequence ID" value="XM_006500918.1"/>
</dbReference>
<dbReference type="SMR" id="O88839"/>
<dbReference type="BioGRID" id="197963">
    <property type="interactions" value="1"/>
</dbReference>
<dbReference type="FunCoup" id="O88839">
    <property type="interactions" value="93"/>
</dbReference>
<dbReference type="IntAct" id="O88839">
    <property type="interactions" value="2"/>
</dbReference>
<dbReference type="STRING" id="10090.ENSMUSP00000029676"/>
<dbReference type="MEROPS" id="M12.215"/>
<dbReference type="GlyCosmos" id="O88839">
    <property type="glycosylation" value="5 sites, No reported glycans"/>
</dbReference>
<dbReference type="GlyGen" id="O88839">
    <property type="glycosylation" value="5 sites, 2 N-linked glycans (2 sites)"/>
</dbReference>
<dbReference type="iPTMnet" id="O88839"/>
<dbReference type="PhosphoSitePlus" id="O88839"/>
<dbReference type="SwissPalm" id="O88839"/>
<dbReference type="PaxDb" id="10090-ENSMUSP00000029676"/>
<dbReference type="PeptideAtlas" id="O88839"/>
<dbReference type="ProteomicsDB" id="285603">
    <molecule id="O88839-1"/>
</dbReference>
<dbReference type="ProteomicsDB" id="285604">
    <molecule id="O88839-2"/>
</dbReference>
<dbReference type="ProteomicsDB" id="285605">
    <molecule id="O88839-3"/>
</dbReference>
<dbReference type="ProteomicsDB" id="285606">
    <molecule id="O88839-4"/>
</dbReference>
<dbReference type="Pumba" id="O88839"/>
<dbReference type="Antibodypedia" id="2491">
    <property type="antibodies" value="451 antibodies from 38 providers"/>
</dbReference>
<dbReference type="DNASU" id="11490"/>
<dbReference type="Ensembl" id="ENSMUST00000029676.12">
    <molecule id="O88839-1"/>
    <property type="protein sequence ID" value="ENSMUSP00000029676.6"/>
    <property type="gene ID" value="ENSMUSG00000028041.18"/>
</dbReference>
<dbReference type="Ensembl" id="ENSMUST00000074582.7">
    <molecule id="O88839-3"/>
    <property type="protein sequence ID" value="ENSMUSP00000074167.7"/>
    <property type="gene ID" value="ENSMUSG00000028041.18"/>
</dbReference>
<dbReference type="Ensembl" id="ENSMUST00000107446.8">
    <molecule id="O88839-4"/>
    <property type="protein sequence ID" value="ENSMUSP00000103070.2"/>
    <property type="gene ID" value="ENSMUSG00000028041.18"/>
</dbReference>
<dbReference type="Ensembl" id="ENSMUST00000107448.9">
    <molecule id="O88839-2"/>
    <property type="protein sequence ID" value="ENSMUSP00000103072.3"/>
    <property type="gene ID" value="ENSMUSG00000028041.18"/>
</dbReference>
<dbReference type="Ensembl" id="ENSMUST00000184651.8">
    <molecule id="O88839-1"/>
    <property type="protein sequence ID" value="ENSMUSP00000139147.2"/>
    <property type="gene ID" value="ENSMUSG00000028041.18"/>
</dbReference>
<dbReference type="GeneID" id="11490"/>
<dbReference type="KEGG" id="mmu:11490"/>
<dbReference type="UCSC" id="uc008pyv.1">
    <molecule id="O88839-1"/>
    <property type="organism name" value="mouse"/>
</dbReference>
<dbReference type="UCSC" id="uc008pyw.1">
    <molecule id="O88839-3"/>
    <property type="organism name" value="mouse"/>
</dbReference>
<dbReference type="AGR" id="MGI:1333882"/>
<dbReference type="CTD" id="8751"/>
<dbReference type="MGI" id="MGI:1333882">
    <property type="gene designation" value="Adam15"/>
</dbReference>
<dbReference type="VEuPathDB" id="HostDB:ENSMUSG00000028041"/>
<dbReference type="eggNOG" id="KOG3607">
    <property type="taxonomic scope" value="Eukaryota"/>
</dbReference>
<dbReference type="GeneTree" id="ENSGT00940000159822"/>
<dbReference type="HOGENOM" id="CLU_012714_7_2_1"/>
<dbReference type="InParanoid" id="O88839"/>
<dbReference type="OMA" id="HADSWAS"/>
<dbReference type="OrthoDB" id="5951731at2759"/>
<dbReference type="PhylomeDB" id="O88839"/>
<dbReference type="TreeFam" id="TF314733"/>
<dbReference type="Reactome" id="R-MMU-1474228">
    <property type="pathway name" value="Degradation of the extracellular matrix"/>
</dbReference>
<dbReference type="Reactome" id="R-MMU-8941237">
    <property type="pathway name" value="Invadopodia formation"/>
</dbReference>
<dbReference type="BioGRID-ORCS" id="11490">
    <property type="hits" value="2 hits in 76 CRISPR screens"/>
</dbReference>
<dbReference type="ChiTaRS" id="Adam15">
    <property type="organism name" value="mouse"/>
</dbReference>
<dbReference type="PRO" id="PR:O88839"/>
<dbReference type="Proteomes" id="UP000000589">
    <property type="component" value="Chromosome 3"/>
</dbReference>
<dbReference type="RNAct" id="O88839">
    <property type="molecule type" value="protein"/>
</dbReference>
<dbReference type="Bgee" id="ENSMUSG00000028041">
    <property type="expression patterns" value="Expressed in granulocyte and 221 other cell types or tissues"/>
</dbReference>
<dbReference type="GO" id="GO:0001669">
    <property type="term" value="C:acrosomal vesicle"/>
    <property type="evidence" value="ECO:0007669"/>
    <property type="project" value="UniProtKB-SubCell"/>
</dbReference>
<dbReference type="GO" id="GO:0005912">
    <property type="term" value="C:adherens junction"/>
    <property type="evidence" value="ECO:0007669"/>
    <property type="project" value="UniProtKB-SubCell"/>
</dbReference>
<dbReference type="GO" id="GO:0009986">
    <property type="term" value="C:cell surface"/>
    <property type="evidence" value="ECO:0007669"/>
    <property type="project" value="Ensembl"/>
</dbReference>
<dbReference type="GO" id="GO:0070062">
    <property type="term" value="C:extracellular exosome"/>
    <property type="evidence" value="ECO:0007669"/>
    <property type="project" value="Ensembl"/>
</dbReference>
<dbReference type="GO" id="GO:0005615">
    <property type="term" value="C:extracellular space"/>
    <property type="evidence" value="ECO:0007005"/>
    <property type="project" value="BHF-UCL"/>
</dbReference>
<dbReference type="GO" id="GO:0016020">
    <property type="term" value="C:membrane"/>
    <property type="evidence" value="ECO:0007669"/>
    <property type="project" value="UniProtKB-KW"/>
</dbReference>
<dbReference type="GO" id="GO:0031514">
    <property type="term" value="C:motile cilium"/>
    <property type="evidence" value="ECO:0007669"/>
    <property type="project" value="UniProtKB-SubCell"/>
</dbReference>
<dbReference type="GO" id="GO:0034987">
    <property type="term" value="F:immunoglobulin receptor binding"/>
    <property type="evidence" value="ECO:0007669"/>
    <property type="project" value="Ensembl"/>
</dbReference>
<dbReference type="GO" id="GO:0005178">
    <property type="term" value="F:integrin binding"/>
    <property type="evidence" value="ECO:0007669"/>
    <property type="project" value="Ensembl"/>
</dbReference>
<dbReference type="GO" id="GO:0046872">
    <property type="term" value="F:metal ion binding"/>
    <property type="evidence" value="ECO:0007669"/>
    <property type="project" value="UniProtKB-KW"/>
</dbReference>
<dbReference type="GO" id="GO:0004222">
    <property type="term" value="F:metalloendopeptidase activity"/>
    <property type="evidence" value="ECO:0007669"/>
    <property type="project" value="InterPro"/>
</dbReference>
<dbReference type="GO" id="GO:0017124">
    <property type="term" value="F:SH3 domain binding"/>
    <property type="evidence" value="ECO:0007669"/>
    <property type="project" value="UniProtKB-KW"/>
</dbReference>
<dbReference type="GO" id="GO:0001525">
    <property type="term" value="P:angiogenesis"/>
    <property type="evidence" value="ECO:0007669"/>
    <property type="project" value="UniProtKB-KW"/>
</dbReference>
<dbReference type="GO" id="GO:0060317">
    <property type="term" value="P:cardiac epithelial to mesenchymal transition"/>
    <property type="evidence" value="ECO:0000315"/>
    <property type="project" value="MGI"/>
</dbReference>
<dbReference type="GO" id="GO:0007155">
    <property type="term" value="P:cell adhesion"/>
    <property type="evidence" value="ECO:0007669"/>
    <property type="project" value="UniProtKB-KW"/>
</dbReference>
<dbReference type="GO" id="GO:1904628">
    <property type="term" value="P:cellular response to phorbol 13-acetate 12-myristate"/>
    <property type="evidence" value="ECO:0007669"/>
    <property type="project" value="Ensembl"/>
</dbReference>
<dbReference type="GO" id="GO:0030574">
    <property type="term" value="P:collagen catabolic process"/>
    <property type="evidence" value="ECO:0007669"/>
    <property type="project" value="UniProtKB-KW"/>
</dbReference>
<dbReference type="GO" id="GO:0002418">
    <property type="term" value="P:immune response to tumor cell"/>
    <property type="evidence" value="ECO:0007669"/>
    <property type="project" value="Ensembl"/>
</dbReference>
<dbReference type="GO" id="GO:0045087">
    <property type="term" value="P:innate immune response"/>
    <property type="evidence" value="ECO:0007669"/>
    <property type="project" value="Ensembl"/>
</dbReference>
<dbReference type="GO" id="GO:0007229">
    <property type="term" value="P:integrin-mediated signaling pathway"/>
    <property type="evidence" value="ECO:0007669"/>
    <property type="project" value="Ensembl"/>
</dbReference>
<dbReference type="GO" id="GO:0008584">
    <property type="term" value="P:male gonad development"/>
    <property type="evidence" value="ECO:0007669"/>
    <property type="project" value="Ensembl"/>
</dbReference>
<dbReference type="GO" id="GO:0030308">
    <property type="term" value="P:negative regulation of cell growth"/>
    <property type="evidence" value="ECO:0007669"/>
    <property type="project" value="Ensembl"/>
</dbReference>
<dbReference type="GO" id="GO:0030336">
    <property type="term" value="P:negative regulation of cell migration"/>
    <property type="evidence" value="ECO:0007669"/>
    <property type="project" value="Ensembl"/>
</dbReference>
<dbReference type="GO" id="GO:0001953">
    <property type="term" value="P:negative regulation of cell-matrix adhesion"/>
    <property type="evidence" value="ECO:0007669"/>
    <property type="project" value="Ensembl"/>
</dbReference>
<dbReference type="GO" id="GO:0006508">
    <property type="term" value="P:proteolysis"/>
    <property type="evidence" value="ECO:0007669"/>
    <property type="project" value="UniProtKB-KW"/>
</dbReference>
<dbReference type="GO" id="GO:1990910">
    <property type="term" value="P:response to hypobaric hypoxia"/>
    <property type="evidence" value="ECO:0007669"/>
    <property type="project" value="Ensembl"/>
</dbReference>
<dbReference type="GO" id="GO:0042246">
    <property type="term" value="P:tissue regeneration"/>
    <property type="evidence" value="ECO:0007669"/>
    <property type="project" value="Ensembl"/>
</dbReference>
<dbReference type="CDD" id="cd04269">
    <property type="entry name" value="ZnMc_adamalysin_II_like"/>
    <property type="match status" value="1"/>
</dbReference>
<dbReference type="FunFam" id="3.40.390.10:FF:000014">
    <property type="entry name" value="disintegrin and metalloproteinase domain-containing protein 11"/>
    <property type="match status" value="1"/>
</dbReference>
<dbReference type="FunFam" id="4.10.70.10:FF:000001">
    <property type="entry name" value="Disintegrin and metalloproteinase domain-containing protein 22"/>
    <property type="match status" value="1"/>
</dbReference>
<dbReference type="Gene3D" id="3.40.390.10">
    <property type="entry name" value="Collagenase (Catalytic Domain)"/>
    <property type="match status" value="1"/>
</dbReference>
<dbReference type="Gene3D" id="4.10.70.10">
    <property type="entry name" value="Disintegrin domain"/>
    <property type="match status" value="1"/>
</dbReference>
<dbReference type="Gene3D" id="2.60.120.260">
    <property type="entry name" value="Galactose-binding domain-like"/>
    <property type="match status" value="1"/>
</dbReference>
<dbReference type="InterPro" id="IPR006586">
    <property type="entry name" value="ADAM_Cys-rich"/>
</dbReference>
<dbReference type="InterPro" id="IPR001762">
    <property type="entry name" value="Disintegrin_dom"/>
</dbReference>
<dbReference type="InterPro" id="IPR036436">
    <property type="entry name" value="Disintegrin_dom_sf"/>
</dbReference>
<dbReference type="InterPro" id="IPR000742">
    <property type="entry name" value="EGF-like_dom"/>
</dbReference>
<dbReference type="InterPro" id="IPR024079">
    <property type="entry name" value="MetalloPept_cat_dom_sf"/>
</dbReference>
<dbReference type="InterPro" id="IPR001590">
    <property type="entry name" value="Peptidase_M12B"/>
</dbReference>
<dbReference type="InterPro" id="IPR002870">
    <property type="entry name" value="Peptidase_M12B_N"/>
</dbReference>
<dbReference type="InterPro" id="IPR034027">
    <property type="entry name" value="Reprolysin_adamalysin"/>
</dbReference>
<dbReference type="PANTHER" id="PTHR11905">
    <property type="entry name" value="ADAM A DISINTEGRIN AND METALLOPROTEASE DOMAIN"/>
    <property type="match status" value="1"/>
</dbReference>
<dbReference type="PANTHER" id="PTHR11905:SF130">
    <property type="entry name" value="DISINTEGRIN AND METALLOPROTEINASE DOMAIN-CONTAINING PROTEIN 15"/>
    <property type="match status" value="1"/>
</dbReference>
<dbReference type="Pfam" id="PF08516">
    <property type="entry name" value="ADAM_CR"/>
    <property type="match status" value="1"/>
</dbReference>
<dbReference type="Pfam" id="PF00200">
    <property type="entry name" value="Disintegrin"/>
    <property type="match status" value="1"/>
</dbReference>
<dbReference type="Pfam" id="PF01562">
    <property type="entry name" value="Pep_M12B_propep"/>
    <property type="match status" value="1"/>
</dbReference>
<dbReference type="Pfam" id="PF01421">
    <property type="entry name" value="Reprolysin"/>
    <property type="match status" value="1"/>
</dbReference>
<dbReference type="SMART" id="SM00608">
    <property type="entry name" value="ACR"/>
    <property type="match status" value="1"/>
</dbReference>
<dbReference type="SMART" id="SM00050">
    <property type="entry name" value="DISIN"/>
    <property type="match status" value="1"/>
</dbReference>
<dbReference type="SUPFAM" id="SSF57552">
    <property type="entry name" value="Blood coagulation inhibitor (disintegrin)"/>
    <property type="match status" value="1"/>
</dbReference>
<dbReference type="SUPFAM" id="SSF55486">
    <property type="entry name" value="Metalloproteases ('zincins'), catalytic domain"/>
    <property type="match status" value="1"/>
</dbReference>
<dbReference type="PROSITE" id="PS50215">
    <property type="entry name" value="ADAM_MEPRO"/>
    <property type="match status" value="1"/>
</dbReference>
<dbReference type="PROSITE" id="PS50214">
    <property type="entry name" value="DISINTEGRIN_2"/>
    <property type="match status" value="1"/>
</dbReference>
<dbReference type="PROSITE" id="PS01186">
    <property type="entry name" value="EGF_2"/>
    <property type="match status" value="1"/>
</dbReference>
<dbReference type="PROSITE" id="PS50026">
    <property type="entry name" value="EGF_3"/>
    <property type="match status" value="1"/>
</dbReference>
<dbReference type="PROSITE" id="PS00142">
    <property type="entry name" value="ZINC_PROTEASE"/>
    <property type="match status" value="1"/>
</dbReference>
<proteinExistence type="evidence at protein level"/>
<comment type="function">
    <text evidence="1 9 10 11 13">Active metalloproteinase with gelatinolytic and collagenolytic activity. Plays a role in the wound healing process. Mediates both heterotypic intraepithelial cell/T-cell interactions and homotypic T-cell aggregation. Inhibits beta-1 integrin-mediated cell adhesion and migration of airway smooth muscle cells. Suppresses cell motility on or towards fibronectin possibly by driving alpha-v/beta-1 integrin (ITAGV-ITGB1) cell surface expression via ERK1/2 inactivation. Cleaves E-cadherin in response to growth factor deprivation. Plays a role in glomerular cell migration (By similarity). Plays a role in pathological neovascularization. May play a role in cartilage remodeling. May be proteolytically processed, during sperm epididymal maturation and the acrosome reaction. May play a role in sperm-egg binding through its disintegrin domain. Interactions with egg membrane could be mediated via binding between the disintegrin-like domain to one or more integrin receptors on the egg.</text>
</comment>
<comment type="cofactor">
    <cofactor evidence="18">
        <name>Zn(2+)</name>
        <dbReference type="ChEBI" id="CHEBI:29105"/>
    </cofactor>
    <text evidence="18">Binds 1 zinc ion per subunit.</text>
</comment>
<comment type="subunit">
    <text evidence="1">Interacts specifically with Src family protein-tyrosine kinases (PTKs) (By similarity). Interacts with ITAGV-ITGB3 (vitronectin receptor). Interacts with SH3GL2 and SNX9; this interaction occurs preferentially with ADAM15 precursor, rather than the processed form, suggesting it occurs in a secretory pathway compartment prior to the medial Golgi. Interacts with ITAG9-ITGB1. Interacts with SH3PXD2A (By similarity). Interacts with ITAGV-ITGB1. Interacts with GRB2, HCK, ITSN1, ITSN2, LYN, MAPK1, MAPK3, NCF1, NCK1, nephrocystin, PTK6, SNX33, LCK and SRC (By similarity).</text>
</comment>
<comment type="subcellular location">
    <subcellularLocation>
        <location evidence="13">Endomembrane system</location>
        <topology evidence="13">Single-pass type I membrane protein</topology>
    </subcellularLocation>
    <subcellularLocation>
        <location evidence="1">Cell junction</location>
        <location evidence="1">Adherens junction</location>
    </subcellularLocation>
    <subcellularLocation>
        <location evidence="13">Cell projection</location>
        <location evidence="13">Cilium</location>
        <location evidence="13">Flagellum</location>
    </subcellularLocation>
    <subcellularLocation>
        <location evidence="13">Cytoplasmic vesicle</location>
        <location evidence="13">Secretory vesicle</location>
        <location evidence="13">Acrosome</location>
    </subcellularLocation>
    <text>The majority of the protein is localized in a perinuclear compartment which may correspond to the trans-Golgi network or the late endosome. The pro-protein is the major detectable form on the cell surface, whereas the majority of the protein in the cell is processed.</text>
</comment>
<comment type="alternative products">
    <event type="alternative splicing"/>
    <isoform>
        <id>O88839-1</id>
        <name>1</name>
        <name>ADAM15v2</name>
        <sequence type="displayed"/>
    </isoform>
    <isoform>
        <id>O88839-2</id>
        <name>2</name>
        <name>ADAM15v1</name>
        <sequence type="described" ref="VSP_008880"/>
    </isoform>
    <isoform>
        <id>O88839-3</id>
        <name>3</name>
        <name>ADAM15</name>
        <sequence type="described" ref="VSP_008881"/>
    </isoform>
    <isoform>
        <id>O88839-4</id>
        <name>4</name>
        <sequence type="described" ref="VSP_008879"/>
    </isoform>
</comment>
<comment type="tissue specificity">
    <text evidence="12 13">Expressed moderately in pericytes of retina. Expressed in testis and in spermatozoa from the caput, corpus, and cauda epididymis, as well as in non-capacitated and acrosome-reacted sperm (at protein level). Highly expressed in heart, brain, lung, and kidney. Expressed at lower levels in spleen, liver, testis and muscle.</text>
</comment>
<comment type="developmental stage">
    <text evidence="10 12">At 13.5 dpc, strongly expressed in the developing vasculature of the endocardium. At P17, expressed throughout the retina (at protein level). At 9.5 dpc and thereafter, prominently expressed in the vasculature, including in ventral and dorsal aorta and the caudal artery. In developing heart, detected in endocardium and blood vessels of the ventricle, bulbus arteriosus, and atrium. Also highly expressed in hypertrophic cells of the developing bone. In adult, expressed prominently in brain, including in hippocampus, cerebellum, pons, thalamus, cortex, and olfactory bulb.</text>
</comment>
<comment type="induction">
    <text evidence="10 12">By hypoxic stimulus in retina (at protein level). Up-regulated by VEGF in retina.</text>
</comment>
<comment type="domain">
    <text>The cytoplasmic domain is required for SH3GL2- and SNX9-binding.</text>
</comment>
<comment type="domain">
    <text evidence="1">Disintegrin domain binds to integrin alphaV-beta3.</text>
</comment>
<comment type="domain">
    <text>The conserved cysteine present in the cysteine-switch motif binds the catalytic zinc ion, thus inhibiting the enzyme. The dissociation of the cysteine from the zinc ion upon the activation-peptide release activates the enzyme.</text>
</comment>
<comment type="PTM">
    <text evidence="14">The precursor is cleaved by a furin endopeptidase. An additional membrane proximal site of cleavage affects a small percentage of the proteins and results in disulfide-linked fragments. The prodomain is apparently cleaved in several positions that are N-terminal of the furin cleavage site.</text>
</comment>
<comment type="PTM">
    <text>May be partially sialylated.</text>
</comment>
<comment type="PTM">
    <text evidence="1">Phosphorylation increases association with PTKs.</text>
</comment>
<comment type="miscellaneous">
    <text>Mice targeted for deletion of the first 27 amino acids of the ADAM15 N-terminal sequence are viable and fertile, showing no major developmental defects and displaying normal mortality or morbidity. These mutant mice, however, exhibit significantly reduced ischemia-induced retinal neovascularization, choroidal neovascularization at rupture sites in Bruch's membrane, and VEGF-induced subretinal neovascularization, and develop significantly smaller tumors following implantation of B16F0 melanoma cells. Aging mutant mice exhibit accelerated development of osteoarthritic lesions in knee joints.</text>
</comment>
<name>ADA15_MOUSE</name>
<protein>
    <recommendedName>
        <fullName>Disintegrin and metalloproteinase domain-containing protein 15</fullName>
        <shortName>ADAM 15</shortName>
        <ecNumber>3.4.24.-</ecNumber>
    </recommendedName>
    <alternativeName>
        <fullName>AD56</fullName>
    </alternativeName>
    <alternativeName>
        <fullName>Metalloprotease RGD disintegrin protein</fullName>
    </alternativeName>
    <alternativeName>
        <fullName>Metalloproteinase-like, disintegrin-like, and cysteine-rich protein 15</fullName>
        <shortName>MDC-15</shortName>
    </alternativeName>
    <alternativeName>
        <fullName>Metargidin</fullName>
    </alternativeName>
</protein>